<dbReference type="GO" id="GO:0005576">
    <property type="term" value="C:extracellular region"/>
    <property type="evidence" value="ECO:0007669"/>
    <property type="project" value="UniProtKB-SubCell"/>
</dbReference>
<dbReference type="GO" id="GO:0042742">
    <property type="term" value="P:defense response to bacterium"/>
    <property type="evidence" value="ECO:0007669"/>
    <property type="project" value="UniProtKB-KW"/>
</dbReference>
<keyword id="KW-0044">Antibiotic</keyword>
<keyword id="KW-0929">Antimicrobial</keyword>
<keyword id="KW-0903">Direct protein sequencing</keyword>
<keyword id="KW-0964">Secreted</keyword>
<proteinExistence type="evidence at protein level"/>
<organism>
    <name type="scientific">Ectatomma brunneum</name>
    <name type="common">Ant</name>
    <name type="synonym">Ectatomma quadridens</name>
    <dbReference type="NCBI Taxonomy" id="369127"/>
    <lineage>
        <taxon>Eukaryota</taxon>
        <taxon>Metazoa</taxon>
        <taxon>Ecdysozoa</taxon>
        <taxon>Arthropoda</taxon>
        <taxon>Hexapoda</taxon>
        <taxon>Insecta</taxon>
        <taxon>Pterygota</taxon>
        <taxon>Neoptera</taxon>
        <taxon>Endopterygota</taxon>
        <taxon>Hymenoptera</taxon>
        <taxon>Apocrita</taxon>
        <taxon>Aculeata</taxon>
        <taxon>Formicoidea</taxon>
        <taxon>Formicidae</taxon>
        <taxon>Ectatomminae</taxon>
        <taxon>Ectatommini</taxon>
        <taxon>Ectatomma</taxon>
    </lineage>
</organism>
<sequence length="24" mass="2423">FWGALVAGLAPKVAIGIKAINKKG</sequence>
<accession>C0HK46</accession>
<evidence type="ECO:0000269" key="1">
    <source>
    </source>
</evidence>
<evidence type="ECO:0000303" key="2">
    <source>
    </source>
</evidence>
<evidence type="ECO:0000303" key="3">
    <source>
    </source>
</evidence>
<evidence type="ECO:0000305" key="4"/>
<evidence type="ECO:0000305" key="5">
    <source>
    </source>
</evidence>
<comment type="function">
    <text evidence="1">Antimicrobial peptide active against Gram-negative bacterium E.coli MH1 (MIC=2.5 uM) and P.aeruginosa PAO1 (MIC=10 uM) and against Gram-positive bacterium A.globiformis VKM Ac-1112 (MIC=0.6 uM).</text>
</comment>
<comment type="subcellular location">
    <subcellularLocation>
        <location evidence="1">Secreted</location>
    </subcellularLocation>
</comment>
<comment type="tissue specificity">
    <text evidence="5">Expressed by the venom gland.</text>
</comment>
<comment type="mass spectrometry" mass="2607.7" method="MALDI" evidence="1"/>
<comment type="similarity">
    <text evidence="4">Belongs to the ponericin-Q family.</text>
</comment>
<feature type="peptide" id="PRO_0000437655" description="M-ectatotoxin-Eb2b" evidence="1">
    <location>
        <begin position="1"/>
        <end position="24"/>
    </location>
</feature>
<protein>
    <recommendedName>
        <fullName evidence="3">M-ectatotoxin-Eb2b</fullName>
        <shortName evidence="3">M-ECTX-Eb2b</shortName>
    </recommendedName>
    <alternativeName>
        <fullName evidence="2">Ponericin-Q49</fullName>
    </alternativeName>
</protein>
<name>LTX2B_ECTBR</name>
<reference key="1">
    <citation type="journal article" date="2014" name="Biochimie">
        <title>Linear antimicrobial peptides from Ectatomma quadridens ant venom.</title>
        <authorList>
            <person name="Pluzhnikov K.A."/>
            <person name="Kozlov S.A."/>
            <person name="Vassilevski A.A."/>
            <person name="Vorontsova O.V."/>
            <person name="Feofanov A.V."/>
            <person name="Grishin E.V."/>
        </authorList>
    </citation>
    <scope>PROTEIN SEQUENCE</scope>
    <scope>FUNCTION</scope>
    <scope>SUBCELLULAR LOCATION</scope>
    <scope>MASS SPECTROMETRY</scope>
    <source>
        <tissue>Venom</tissue>
    </source>
</reference>
<reference key="2">
    <citation type="journal article" date="2016" name="Toxins">
        <title>The biochemical toxin arsenal from ant venoms.</title>
        <authorList>
            <person name="Touchard A."/>
            <person name="Aili S.R."/>
            <person name="Fox E.G."/>
            <person name="Escoubas P."/>
            <person name="Orivel J."/>
            <person name="Nicholson G.M."/>
            <person name="Dejean A."/>
        </authorList>
    </citation>
    <scope>REVIEW</scope>
    <scope>NOMENCLATURE</scope>
</reference>